<keyword id="KW-0238">DNA-binding</keyword>
<keyword id="KW-0597">Phosphoprotein</keyword>
<keyword id="KW-0678">Repressor</keyword>
<keyword id="KW-0804">Transcription</keyword>
<keyword id="KW-0805">Transcription regulation</keyword>
<proteinExistence type="inferred from homology"/>
<accession>O69280</accession>
<comment type="function">
    <text>May serve to repress the entericidin locus in C.freundii.</text>
</comment>
<reference key="1">
    <citation type="journal article" date="1998" name="J. Mol. Biol.">
        <title>The entericidin locus of Escherichia coli and its implications for programmed bacterial cell death.</title>
        <authorList>
            <person name="Bishop R.E."/>
            <person name="Leskiw B.K."/>
            <person name="Hodges R.S."/>
            <person name="Kay C.M."/>
            <person name="Weiner J.H."/>
        </authorList>
    </citation>
    <scope>NUCLEOTIDE SEQUENCE [GENOMIC DNA]</scope>
    <source>
        <strain>OS60</strain>
    </source>
</reference>
<dbReference type="EMBL" id="U21727">
    <property type="protein sequence ID" value="AAC46458.1"/>
    <property type="molecule type" value="Genomic_DNA"/>
</dbReference>
<dbReference type="RefSeq" id="WP_071685151.1">
    <property type="nucleotide sequence ID" value="NZ_BGLH01000013.1"/>
</dbReference>
<dbReference type="SMR" id="O69280"/>
<dbReference type="STRING" id="1333848.CFNIH1_08400"/>
<dbReference type="GO" id="GO:0003677">
    <property type="term" value="F:DNA binding"/>
    <property type="evidence" value="ECO:0007669"/>
    <property type="project" value="UniProtKB-KW"/>
</dbReference>
<dbReference type="GO" id="GO:0000160">
    <property type="term" value="P:phosphorelay signal transduction system"/>
    <property type="evidence" value="ECO:0007669"/>
    <property type="project" value="InterPro"/>
</dbReference>
<dbReference type="GO" id="GO:0006355">
    <property type="term" value="P:regulation of DNA-templated transcription"/>
    <property type="evidence" value="ECO:0007669"/>
    <property type="project" value="InterPro"/>
</dbReference>
<dbReference type="CDD" id="cd06170">
    <property type="entry name" value="LuxR_C_like"/>
    <property type="match status" value="1"/>
</dbReference>
<dbReference type="Gene3D" id="3.40.50.2300">
    <property type="match status" value="1"/>
</dbReference>
<dbReference type="InterPro" id="IPR016032">
    <property type="entry name" value="Sig_transdc_resp-reg_C-effctor"/>
</dbReference>
<dbReference type="InterPro" id="IPR001789">
    <property type="entry name" value="Sig_transdc_resp-reg_receiver"/>
</dbReference>
<dbReference type="InterPro" id="IPR000792">
    <property type="entry name" value="Tscrpt_reg_LuxR_C"/>
</dbReference>
<dbReference type="InterPro" id="IPR039420">
    <property type="entry name" value="WalR-like"/>
</dbReference>
<dbReference type="PANTHER" id="PTHR43214:SF41">
    <property type="entry name" value="NITRATE_NITRITE RESPONSE REGULATOR PROTEIN NARP"/>
    <property type="match status" value="1"/>
</dbReference>
<dbReference type="PANTHER" id="PTHR43214">
    <property type="entry name" value="TWO-COMPONENT RESPONSE REGULATOR"/>
    <property type="match status" value="1"/>
</dbReference>
<dbReference type="Pfam" id="PF00196">
    <property type="entry name" value="GerE"/>
    <property type="match status" value="1"/>
</dbReference>
<dbReference type="PRINTS" id="PR00038">
    <property type="entry name" value="HTHLUXR"/>
</dbReference>
<dbReference type="SMART" id="SM00421">
    <property type="entry name" value="HTH_LUXR"/>
    <property type="match status" value="1"/>
</dbReference>
<dbReference type="SUPFAM" id="SSF46894">
    <property type="entry name" value="C-terminal effector domain of the bipartite response regulators"/>
    <property type="match status" value="1"/>
</dbReference>
<dbReference type="PROSITE" id="PS00622">
    <property type="entry name" value="HTH_LUXR_1"/>
    <property type="match status" value="1"/>
</dbReference>
<dbReference type="PROSITE" id="PS50043">
    <property type="entry name" value="HTH_LUXR_2"/>
    <property type="match status" value="1"/>
</dbReference>
<dbReference type="PROSITE" id="PS50110">
    <property type="entry name" value="RESPONSE_REGULATORY"/>
    <property type="match status" value="1"/>
</dbReference>
<sequence length="199" mass="22011">MLKILVIDRCHFTRTGIEALLNHSGRFSSSFLVSGINNLLLAKEHILQWKPHLVIADLNSFISETHSSPPINPFFMSCGVIPLILLQSADRQHAPIAPSQSVAHSVLTKHTTLNTLSHTIQEALQVRPALEIPKNATPLLTPQEEKVLSMWMDGVSNNAIAAALSIHGKTVYTYKRNIRMKLHLGNRFSPFLSLPGKGD</sequence>
<protein>
    <recommendedName>
        <fullName>Transcriptional regulatory protein EntR</fullName>
    </recommendedName>
    <alternativeName>
        <fullName>Entericidin R</fullName>
    </alternativeName>
</protein>
<name>ECNR_CITFR</name>
<gene>
    <name type="primary">ecnR</name>
</gene>
<feature type="chain" id="PRO_0000184150" description="Transcriptional regulatory protein EntR">
    <location>
        <begin position="1"/>
        <end position="199"/>
    </location>
</feature>
<feature type="domain" description="Response regulatory" evidence="1">
    <location>
        <begin position="3"/>
        <end position="124"/>
    </location>
</feature>
<feature type="domain" description="HTH luxR-type" evidence="2">
    <location>
        <begin position="133"/>
        <end position="198"/>
    </location>
</feature>
<feature type="DNA-binding region" description="H-T-H motif" evidence="2">
    <location>
        <begin position="157"/>
        <end position="176"/>
    </location>
</feature>
<feature type="modified residue" description="4-aspartylphosphate" evidence="1">
    <location>
        <position position="8"/>
    </location>
</feature>
<evidence type="ECO:0000255" key="1">
    <source>
        <dbReference type="PROSITE-ProRule" id="PRU00169"/>
    </source>
</evidence>
<evidence type="ECO:0000255" key="2">
    <source>
        <dbReference type="PROSITE-ProRule" id="PRU00411"/>
    </source>
</evidence>
<organism>
    <name type="scientific">Citrobacter freundii</name>
    <dbReference type="NCBI Taxonomy" id="546"/>
    <lineage>
        <taxon>Bacteria</taxon>
        <taxon>Pseudomonadati</taxon>
        <taxon>Pseudomonadota</taxon>
        <taxon>Gammaproteobacteria</taxon>
        <taxon>Enterobacterales</taxon>
        <taxon>Enterobacteriaceae</taxon>
        <taxon>Citrobacter</taxon>
        <taxon>Citrobacter freundii complex</taxon>
    </lineage>
</organism>